<keyword id="KW-0997">Cell inner membrane</keyword>
<keyword id="KW-1003">Cell membrane</keyword>
<keyword id="KW-0444">Lipid biosynthesis</keyword>
<keyword id="KW-0443">Lipid metabolism</keyword>
<keyword id="KW-0472">Membrane</keyword>
<keyword id="KW-0594">Phospholipid biosynthesis</keyword>
<keyword id="KW-1208">Phospholipid metabolism</keyword>
<keyword id="KW-1185">Reference proteome</keyword>
<keyword id="KW-0808">Transferase</keyword>
<keyword id="KW-0812">Transmembrane</keyword>
<keyword id="KW-1133">Transmembrane helix</keyword>
<name>PLSY_ROSDO</name>
<protein>
    <recommendedName>
        <fullName evidence="1">Glycerol-3-phosphate acyltransferase</fullName>
    </recommendedName>
    <alternativeName>
        <fullName evidence="1">Acyl-PO4 G3P acyltransferase</fullName>
    </alternativeName>
    <alternativeName>
        <fullName evidence="1">Acyl-phosphate--glycerol-3-phosphate acyltransferase</fullName>
    </alternativeName>
    <alternativeName>
        <fullName evidence="1">G3P acyltransferase</fullName>
        <shortName evidence="1">GPAT</shortName>
        <ecNumber evidence="1">2.3.1.275</ecNumber>
    </alternativeName>
    <alternativeName>
        <fullName evidence="1">Lysophosphatidic acid synthase</fullName>
        <shortName evidence="1">LPA synthase</shortName>
    </alternativeName>
</protein>
<comment type="function">
    <text evidence="1">Catalyzes the transfer of an acyl group from acyl-phosphate (acyl-PO(4)) to glycerol-3-phosphate (G3P) to form lysophosphatidic acid (LPA). This enzyme utilizes acyl-phosphate as fatty acyl donor, but not acyl-CoA or acyl-ACP.</text>
</comment>
<comment type="catalytic activity">
    <reaction evidence="1">
        <text>an acyl phosphate + sn-glycerol 3-phosphate = a 1-acyl-sn-glycero-3-phosphate + phosphate</text>
        <dbReference type="Rhea" id="RHEA:34075"/>
        <dbReference type="ChEBI" id="CHEBI:43474"/>
        <dbReference type="ChEBI" id="CHEBI:57597"/>
        <dbReference type="ChEBI" id="CHEBI:57970"/>
        <dbReference type="ChEBI" id="CHEBI:59918"/>
        <dbReference type="EC" id="2.3.1.275"/>
    </reaction>
</comment>
<comment type="pathway">
    <text evidence="1">Lipid metabolism; phospholipid metabolism.</text>
</comment>
<comment type="subunit">
    <text evidence="1">Probably interacts with PlsX.</text>
</comment>
<comment type="subcellular location">
    <subcellularLocation>
        <location evidence="1">Cell inner membrane</location>
        <topology evidence="1">Multi-pass membrane protein</topology>
    </subcellularLocation>
</comment>
<comment type="similarity">
    <text evidence="1">Belongs to the PlsY family.</text>
</comment>
<reference key="1">
    <citation type="journal article" date="2007" name="J. Bacteriol.">
        <title>The complete genome sequence of Roseobacter denitrificans reveals a mixotrophic rather than photosynthetic metabolism.</title>
        <authorList>
            <person name="Swingley W.D."/>
            <person name="Sadekar S."/>
            <person name="Mastrian S.D."/>
            <person name="Matthies H.J."/>
            <person name="Hao J."/>
            <person name="Ramos H."/>
            <person name="Acharya C.R."/>
            <person name="Conrad A.L."/>
            <person name="Taylor H.L."/>
            <person name="Dejesa L.C."/>
            <person name="Shah M.K."/>
            <person name="O'Huallachain M.E."/>
            <person name="Lince M.T."/>
            <person name="Blankenship R.E."/>
            <person name="Beatty J.T."/>
            <person name="Touchman J.W."/>
        </authorList>
    </citation>
    <scope>NUCLEOTIDE SEQUENCE [LARGE SCALE GENOMIC DNA]</scope>
    <source>
        <strain>ATCC 33942 / OCh 114</strain>
    </source>
</reference>
<accession>Q163C2</accession>
<feature type="chain" id="PRO_0000250328" description="Glycerol-3-phosphate acyltransferase">
    <location>
        <begin position="1"/>
        <end position="200"/>
    </location>
</feature>
<feature type="transmembrane region" description="Helical" evidence="1">
    <location>
        <begin position="8"/>
        <end position="28"/>
    </location>
</feature>
<feature type="transmembrane region" description="Helical" evidence="1">
    <location>
        <begin position="57"/>
        <end position="77"/>
    </location>
</feature>
<feature type="transmembrane region" description="Helical" evidence="1">
    <location>
        <begin position="88"/>
        <end position="108"/>
    </location>
</feature>
<feature type="transmembrane region" description="Helical" evidence="1">
    <location>
        <begin position="114"/>
        <end position="134"/>
    </location>
</feature>
<feature type="transmembrane region" description="Helical" evidence="1">
    <location>
        <begin position="159"/>
        <end position="179"/>
    </location>
</feature>
<organism>
    <name type="scientific">Roseobacter denitrificans (strain ATCC 33942 / OCh 114)</name>
    <name type="common">Erythrobacter sp. (strain OCh 114)</name>
    <name type="synonym">Roseobacter denitrificans</name>
    <dbReference type="NCBI Taxonomy" id="375451"/>
    <lineage>
        <taxon>Bacteria</taxon>
        <taxon>Pseudomonadati</taxon>
        <taxon>Pseudomonadota</taxon>
        <taxon>Alphaproteobacteria</taxon>
        <taxon>Rhodobacterales</taxon>
        <taxon>Roseobacteraceae</taxon>
        <taxon>Roseobacter</taxon>
    </lineage>
</organism>
<gene>
    <name evidence="1" type="primary">plsY</name>
    <name type="ordered locus">RD1_3430</name>
</gene>
<dbReference type="EC" id="2.3.1.275" evidence="1"/>
<dbReference type="EMBL" id="CP000362">
    <property type="protein sequence ID" value="ABG32921.1"/>
    <property type="molecule type" value="Genomic_DNA"/>
</dbReference>
<dbReference type="SMR" id="Q163C2"/>
<dbReference type="STRING" id="375451.RD1_3430"/>
<dbReference type="KEGG" id="rde:RD1_3430"/>
<dbReference type="eggNOG" id="COG0344">
    <property type="taxonomic scope" value="Bacteria"/>
</dbReference>
<dbReference type="HOGENOM" id="CLU_081254_1_0_5"/>
<dbReference type="UniPathway" id="UPA00085"/>
<dbReference type="Proteomes" id="UP000007029">
    <property type="component" value="Chromosome"/>
</dbReference>
<dbReference type="GO" id="GO:0005886">
    <property type="term" value="C:plasma membrane"/>
    <property type="evidence" value="ECO:0007669"/>
    <property type="project" value="UniProtKB-SubCell"/>
</dbReference>
<dbReference type="GO" id="GO:0043772">
    <property type="term" value="F:acyl-phosphate glycerol-3-phosphate acyltransferase activity"/>
    <property type="evidence" value="ECO:0007669"/>
    <property type="project" value="UniProtKB-UniRule"/>
</dbReference>
<dbReference type="GO" id="GO:0008654">
    <property type="term" value="P:phospholipid biosynthetic process"/>
    <property type="evidence" value="ECO:0007669"/>
    <property type="project" value="UniProtKB-UniRule"/>
</dbReference>
<dbReference type="HAMAP" id="MF_01043">
    <property type="entry name" value="PlsY"/>
    <property type="match status" value="1"/>
</dbReference>
<dbReference type="InterPro" id="IPR003811">
    <property type="entry name" value="G3P_acylTferase_PlsY"/>
</dbReference>
<dbReference type="NCBIfam" id="TIGR00023">
    <property type="entry name" value="glycerol-3-phosphate 1-O-acyltransferase PlsY"/>
    <property type="match status" value="1"/>
</dbReference>
<dbReference type="PANTHER" id="PTHR30309:SF0">
    <property type="entry name" value="GLYCEROL-3-PHOSPHATE ACYLTRANSFERASE-RELATED"/>
    <property type="match status" value="1"/>
</dbReference>
<dbReference type="PANTHER" id="PTHR30309">
    <property type="entry name" value="INNER MEMBRANE PROTEIN YGIH"/>
    <property type="match status" value="1"/>
</dbReference>
<dbReference type="Pfam" id="PF02660">
    <property type="entry name" value="G3P_acyltransf"/>
    <property type="match status" value="1"/>
</dbReference>
<dbReference type="SMART" id="SM01207">
    <property type="entry name" value="G3P_acyltransf"/>
    <property type="match status" value="1"/>
</dbReference>
<evidence type="ECO:0000255" key="1">
    <source>
        <dbReference type="HAMAP-Rule" id="MF_01043"/>
    </source>
</evidence>
<proteinExistence type="inferred from homology"/>
<sequence>MIESTLPALALWGVIGYLLGSIPFGMVLAKVMGLGNLRDIGSGNIGATNVLRTGNKLAAALTLVLDGGKGVVAVLAARAAGGEDLAQIAGLMAMIGHCYPVWLRFAGGKGVATFLGIVLALAFPVGVGCCLAWLAGAFATRISSMGALVASVAAVPLAFLLGFPGAVVLLILLGALIFWRHRGNIARIRTGTEPKIGQKK</sequence>